<organism>
    <name type="scientific">Aliivibrio fischeri (strain MJ11)</name>
    <name type="common">Vibrio fischeri</name>
    <dbReference type="NCBI Taxonomy" id="388396"/>
    <lineage>
        <taxon>Bacteria</taxon>
        <taxon>Pseudomonadati</taxon>
        <taxon>Pseudomonadota</taxon>
        <taxon>Gammaproteobacteria</taxon>
        <taxon>Vibrionales</taxon>
        <taxon>Vibrionaceae</taxon>
        <taxon>Aliivibrio</taxon>
    </lineage>
</organism>
<proteinExistence type="inferred from homology"/>
<accession>B5FDK5</accession>
<sequence length="495" mass="54151">MDNKVSILNQPKPFKMIFFIELWERFGYYGLQGILAVYFVDKLGFSMQDSFVTFGAFAALVYGLVSVGGYVGDYVLGTKRTMVFGAVVLALGYFLMGFSILNPNFIYVALGAIAVGNGLFKANPSSLLAKCYEKGDSRLDGAFTLYYMSINIGSLVSLSISPVIANNYGYEYAFIICGLGLIASLFSYFSLRSTVQGIGSEPDALPLNKTKALIVLIGTIASTLVCAWLLQNIMMANLALGLIGVGVVGFFLKETFKEVGEQRNKMIVAFILMLQAIIFYVLYAQMPTSLNFFAINNVHSELFGMDINPVSLQALNPFWVIFCSPILAYLYTYYGNQNKDLSMPGKFTVGMFMCAFGFLSVAAAGNWFADQAGMVSVWWMVLVYLFQSLGELMISGLGLAMVASLVPQRLMGFTMGAWFLTQAASFIIGGYVATFSATPEHLTDPLDTLPVYTELFQNIGFVTLAVAIVMAITAPKLNKMMTSSQPEDAELVEQP</sequence>
<reference key="1">
    <citation type="submission" date="2008-08" db="EMBL/GenBank/DDBJ databases">
        <title>Complete sequence of Vibrio fischeri strain MJ11.</title>
        <authorList>
            <person name="Mandel M.J."/>
            <person name="Stabb E.V."/>
            <person name="Ruby E.G."/>
            <person name="Ferriera S."/>
            <person name="Johnson J."/>
            <person name="Kravitz S."/>
            <person name="Beeson K."/>
            <person name="Sutton G."/>
            <person name="Rogers Y.-H."/>
            <person name="Friedman R."/>
            <person name="Frazier M."/>
            <person name="Venter J.C."/>
        </authorList>
    </citation>
    <scope>NUCLEOTIDE SEQUENCE [LARGE SCALE GENOMIC DNA]</scope>
    <source>
        <strain>MJ11</strain>
    </source>
</reference>
<name>DTPB_ALIFM</name>
<feature type="chain" id="PRO_0000395189" description="Dipeptide and tripeptide permease B">
    <location>
        <begin position="1"/>
        <end position="495"/>
    </location>
</feature>
<feature type="topological domain" description="Cytoplasmic" evidence="1">
    <location>
        <begin position="1"/>
        <end position="16"/>
    </location>
</feature>
<feature type="transmembrane region" description="Helical" evidence="1">
    <location>
        <begin position="17"/>
        <end position="37"/>
    </location>
</feature>
<feature type="topological domain" description="Periplasmic" evidence="1">
    <location>
        <begin position="38"/>
        <end position="50"/>
    </location>
</feature>
<feature type="transmembrane region" description="Helical" evidence="1">
    <location>
        <begin position="51"/>
        <end position="71"/>
    </location>
</feature>
<feature type="topological domain" description="Cytoplasmic" evidence="1">
    <location>
        <begin position="72"/>
        <end position="80"/>
    </location>
</feature>
<feature type="transmembrane region" description="Helical" evidence="1">
    <location>
        <begin position="81"/>
        <end position="101"/>
    </location>
</feature>
<feature type="topological domain" description="Periplasmic" evidence="1">
    <location>
        <begin position="102"/>
        <end position="104"/>
    </location>
</feature>
<feature type="transmembrane region" description="Helical" evidence="1">
    <location>
        <begin position="105"/>
        <end position="125"/>
    </location>
</feature>
<feature type="topological domain" description="Cytoplasmic" evidence="1">
    <location>
        <begin position="126"/>
        <end position="144"/>
    </location>
</feature>
<feature type="transmembrane region" description="Helical" evidence="1">
    <location>
        <begin position="145"/>
        <end position="165"/>
    </location>
</feature>
<feature type="topological domain" description="Periplasmic" evidence="1">
    <location>
        <begin position="166"/>
        <end position="170"/>
    </location>
</feature>
<feature type="transmembrane region" description="Helical" evidence="1">
    <location>
        <begin position="171"/>
        <end position="191"/>
    </location>
</feature>
<feature type="topological domain" description="Cytoplasmic" evidence="1">
    <location>
        <begin position="192"/>
        <end position="209"/>
    </location>
</feature>
<feature type="transmembrane region" description="Helical" evidence="1">
    <location>
        <begin position="210"/>
        <end position="230"/>
    </location>
</feature>
<feature type="topological domain" description="Periplasmic" evidence="1">
    <location>
        <position position="231"/>
    </location>
</feature>
<feature type="transmembrane region" description="Helical" evidence="1">
    <location>
        <begin position="232"/>
        <end position="252"/>
    </location>
</feature>
<feature type="topological domain" description="Cytoplasmic" evidence="1">
    <location>
        <begin position="253"/>
        <end position="265"/>
    </location>
</feature>
<feature type="transmembrane region" description="Helical" evidence="1">
    <location>
        <begin position="266"/>
        <end position="286"/>
    </location>
</feature>
<feature type="topological domain" description="Periplasmic" evidence="1">
    <location>
        <begin position="287"/>
        <end position="309"/>
    </location>
</feature>
<feature type="transmembrane region" description="Helical" evidence="1">
    <location>
        <begin position="310"/>
        <end position="330"/>
    </location>
</feature>
<feature type="topological domain" description="Cytoplasmic" evidence="1">
    <location>
        <begin position="331"/>
        <end position="348"/>
    </location>
</feature>
<feature type="transmembrane region" description="Helical" evidence="1">
    <location>
        <begin position="349"/>
        <end position="369"/>
    </location>
</feature>
<feature type="topological domain" description="Periplasmic" evidence="1">
    <location>
        <begin position="370"/>
        <end position="373"/>
    </location>
</feature>
<feature type="transmembrane region" description="Helical" evidence="1">
    <location>
        <begin position="374"/>
        <end position="394"/>
    </location>
</feature>
<feature type="topological domain" description="Cytoplasmic" evidence="1">
    <location>
        <begin position="395"/>
        <end position="409"/>
    </location>
</feature>
<feature type="transmembrane region" description="Helical" evidence="1">
    <location>
        <begin position="410"/>
        <end position="430"/>
    </location>
</feature>
<feature type="topological domain" description="Periplasmic" evidence="1">
    <location>
        <begin position="431"/>
        <end position="454"/>
    </location>
</feature>
<feature type="transmembrane region" description="Helical" evidence="1">
    <location>
        <begin position="455"/>
        <end position="475"/>
    </location>
</feature>
<feature type="topological domain" description="Cytoplasmic" evidence="1">
    <location>
        <begin position="476"/>
        <end position="495"/>
    </location>
</feature>
<comment type="function">
    <text evidence="1">Proton-dependent permease that transports di- and tripeptides.</text>
</comment>
<comment type="subcellular location">
    <subcellularLocation>
        <location evidence="1">Cell inner membrane</location>
        <topology evidence="1">Multi-pass membrane protein</topology>
    </subcellularLocation>
</comment>
<comment type="similarity">
    <text evidence="1">Belongs to the major facilitator superfamily. Proton-dependent oligopeptide transporter (POT/PTR) (TC 2.A.17) family. DtpB subfamily.</text>
</comment>
<keyword id="KW-0997">Cell inner membrane</keyword>
<keyword id="KW-1003">Cell membrane</keyword>
<keyword id="KW-0472">Membrane</keyword>
<keyword id="KW-0571">Peptide transport</keyword>
<keyword id="KW-0653">Protein transport</keyword>
<keyword id="KW-0812">Transmembrane</keyword>
<keyword id="KW-1133">Transmembrane helix</keyword>
<keyword id="KW-0813">Transport</keyword>
<evidence type="ECO:0000255" key="1">
    <source>
        <dbReference type="HAMAP-Rule" id="MF_01879"/>
    </source>
</evidence>
<protein>
    <recommendedName>
        <fullName evidence="1">Dipeptide and tripeptide permease B</fullName>
    </recommendedName>
</protein>
<dbReference type="EMBL" id="CP001139">
    <property type="protein sequence ID" value="ACH65837.1"/>
    <property type="molecule type" value="Genomic_DNA"/>
</dbReference>
<dbReference type="RefSeq" id="WP_012533315.1">
    <property type="nucleotide sequence ID" value="NC_011184.1"/>
</dbReference>
<dbReference type="SMR" id="B5FDK5"/>
<dbReference type="KEGG" id="vfm:VFMJ11_1199"/>
<dbReference type="HOGENOM" id="CLU_004790_0_0_6"/>
<dbReference type="Proteomes" id="UP000001857">
    <property type="component" value="Chromosome I"/>
</dbReference>
<dbReference type="GO" id="GO:0005886">
    <property type="term" value="C:plasma membrane"/>
    <property type="evidence" value="ECO:0007669"/>
    <property type="project" value="UniProtKB-SubCell"/>
</dbReference>
<dbReference type="GO" id="GO:0071916">
    <property type="term" value="F:dipeptide transmembrane transporter activity"/>
    <property type="evidence" value="ECO:0007669"/>
    <property type="project" value="UniProtKB-UniRule"/>
</dbReference>
<dbReference type="GO" id="GO:0015333">
    <property type="term" value="F:peptide:proton symporter activity"/>
    <property type="evidence" value="ECO:0007669"/>
    <property type="project" value="UniProtKB-UniRule"/>
</dbReference>
<dbReference type="GO" id="GO:0042937">
    <property type="term" value="F:tripeptide transmembrane transporter activity"/>
    <property type="evidence" value="ECO:0007669"/>
    <property type="project" value="UniProtKB-UniRule"/>
</dbReference>
<dbReference type="GO" id="GO:0015031">
    <property type="term" value="P:protein transport"/>
    <property type="evidence" value="ECO:0007669"/>
    <property type="project" value="UniProtKB-KW"/>
</dbReference>
<dbReference type="CDD" id="cd17346">
    <property type="entry name" value="MFS_DtpA_like"/>
    <property type="match status" value="1"/>
</dbReference>
<dbReference type="FunFam" id="1.20.1250.20:FF:000017">
    <property type="entry name" value="Dipeptide and tripeptide permease A"/>
    <property type="match status" value="1"/>
</dbReference>
<dbReference type="Gene3D" id="1.20.1250.20">
    <property type="entry name" value="MFS general substrate transporter like domains"/>
    <property type="match status" value="1"/>
</dbReference>
<dbReference type="HAMAP" id="MF_01879">
    <property type="entry name" value="PTR2_DtpB_subfam"/>
    <property type="match status" value="1"/>
</dbReference>
<dbReference type="InterPro" id="IPR023778">
    <property type="entry name" value="AA/pep_transptr_DtpB"/>
</dbReference>
<dbReference type="InterPro" id="IPR005279">
    <property type="entry name" value="Dipep/tripep_permease"/>
</dbReference>
<dbReference type="InterPro" id="IPR036259">
    <property type="entry name" value="MFS_trans_sf"/>
</dbReference>
<dbReference type="InterPro" id="IPR050171">
    <property type="entry name" value="MFS_Transporters"/>
</dbReference>
<dbReference type="InterPro" id="IPR000109">
    <property type="entry name" value="POT_fam"/>
</dbReference>
<dbReference type="InterPro" id="IPR018456">
    <property type="entry name" value="PTR2_symporter_CS"/>
</dbReference>
<dbReference type="NCBIfam" id="TIGR00924">
    <property type="entry name" value="yjdL_sub1_fam"/>
    <property type="match status" value="1"/>
</dbReference>
<dbReference type="PANTHER" id="PTHR23517:SF15">
    <property type="entry name" value="PROTON-DEPENDENT OLIGOPEPTIDE FAMILY TRANSPORT PROTEIN"/>
    <property type="match status" value="1"/>
</dbReference>
<dbReference type="PANTHER" id="PTHR23517">
    <property type="entry name" value="RESISTANCE PROTEIN MDTM, PUTATIVE-RELATED-RELATED"/>
    <property type="match status" value="1"/>
</dbReference>
<dbReference type="Pfam" id="PF00854">
    <property type="entry name" value="PTR2"/>
    <property type="match status" value="1"/>
</dbReference>
<dbReference type="SUPFAM" id="SSF103473">
    <property type="entry name" value="MFS general substrate transporter"/>
    <property type="match status" value="1"/>
</dbReference>
<dbReference type="PROSITE" id="PS01023">
    <property type="entry name" value="PTR2_2"/>
    <property type="match status" value="1"/>
</dbReference>
<gene>
    <name evidence="1" type="primary">dtpB</name>
    <name type="ordered locus">VFMJ11_1199</name>
</gene>